<protein>
    <recommendedName>
        <fullName evidence="8 9">Peptide methionine sulfoxide reductase B2, chloroplastic</fullName>
        <shortName evidence="8 9">AtMSRB2</shortName>
        <ecNumber evidence="4 5 6">1.8.4.12</ecNumber>
    </recommendedName>
    <alternativeName>
        <fullName>Peptide-methionine (R)-S-oxide reductasemethionine</fullName>
    </alternativeName>
</protein>
<gene>
    <name evidence="8 9" type="primary">MSRB2</name>
    <name evidence="12" type="ordered locus">At4g21860</name>
    <name evidence="13" type="ORF">T8O5.70</name>
</gene>
<keyword id="KW-0025">Alternative splicing</keyword>
<keyword id="KW-0150">Chloroplast</keyword>
<keyword id="KW-1015">Disulfide bond</keyword>
<keyword id="KW-0249">Electron transport</keyword>
<keyword id="KW-0479">Metal-binding</keyword>
<keyword id="KW-0560">Oxidoreductase</keyword>
<keyword id="KW-0934">Plastid</keyword>
<keyword id="KW-0676">Redox-active center</keyword>
<keyword id="KW-1185">Reference proteome</keyword>
<keyword id="KW-0809">Transit peptide</keyword>
<keyword id="KW-0813">Transport</keyword>
<keyword id="KW-0862">Zinc</keyword>
<feature type="transit peptide" description="Chloroplast" evidence="2">
    <location>
        <begin position="1"/>
        <end position="63"/>
    </location>
</feature>
<feature type="chain" id="PRO_0000395520" description="Peptide methionine sulfoxide reductase B2, chloroplastic">
    <location>
        <begin position="64"/>
        <end position="202"/>
    </location>
</feature>
<feature type="domain" description="MsrB" evidence="3">
    <location>
        <begin position="77"/>
        <end position="198"/>
    </location>
</feature>
<feature type="active site" description="Nucleophile" evidence="3">
    <location>
        <position position="187"/>
    </location>
</feature>
<feature type="binding site" evidence="3">
    <location>
        <position position="116"/>
    </location>
    <ligand>
        <name>Zn(2+)</name>
        <dbReference type="ChEBI" id="CHEBI:29105"/>
    </ligand>
</feature>
<feature type="binding site" evidence="3">
    <location>
        <position position="119"/>
    </location>
    <ligand>
        <name>Zn(2+)</name>
        <dbReference type="ChEBI" id="CHEBI:29105"/>
    </ligand>
</feature>
<feature type="binding site" evidence="3">
    <location>
        <position position="162"/>
    </location>
    <ligand>
        <name>Zn(2+)</name>
        <dbReference type="ChEBI" id="CHEBI:29105"/>
    </ligand>
</feature>
<feature type="binding site" evidence="3">
    <location>
        <position position="165"/>
    </location>
    <ligand>
        <name>Zn(2+)</name>
        <dbReference type="ChEBI" id="CHEBI:29105"/>
    </ligand>
</feature>
<feature type="disulfide bond" description="Redox-active">
    <location>
        <begin position="134"/>
        <end position="187"/>
    </location>
</feature>
<feature type="splice variant" id="VSP_039510" description="In isoform 2." evidence="10">
    <original>PDPDGRRIEITCAACGGHLGHVFKGEGFPTPTDE</original>
    <variation>MGDESRSHVLLVEDILVTFLKEKVSLLLPMSDTV</variation>
    <location>
        <begin position="151"/>
        <end position="184"/>
    </location>
</feature>
<feature type="splice variant" id="VSP_039511" description="In isoform 2." evidence="10">
    <location>
        <begin position="185"/>
        <end position="202"/>
    </location>
</feature>
<feature type="mutagenesis site" description="Increases activity 2-fold. Abolishes reduction by thioredoxin h." evidence="6">
    <original>C</original>
    <variation>S</variation>
    <variation>T</variation>
    <location>
        <position position="134"/>
    </location>
</feature>
<feature type="sequence conflict" description="In Ref. 5; AAM62876." evidence="11" ref="5">
    <original>PLASPSR</original>
    <variation>SFASRSH</variation>
    <location>
        <begin position="31"/>
        <end position="37"/>
    </location>
</feature>
<feature type="sequence conflict" description="In Ref. 5; AAM62876." evidence="11" ref="5">
    <original>A</original>
    <variation>S</variation>
    <location>
        <position position="64"/>
    </location>
</feature>
<feature type="sequence conflict" description="In Ref. 4; BAH19668." evidence="11" ref="4">
    <original>E</original>
    <variation>G</variation>
    <location>
        <position position="79"/>
    </location>
</feature>
<feature type="sequence conflict" description="In Ref. 5; AAM62876." evidence="11" ref="5">
    <original>A</original>
    <variation>T</variation>
    <location>
        <position position="82"/>
    </location>
</feature>
<accession>Q9C5C8</accession>
<accession>A8MQE9</accession>
<accession>B9DG01</accession>
<accession>Q8LE28</accession>
<sequence length="202" mass="21968">MAFNIITPGRVYSATSLTFVSTIKAAFVKPPLASPSRRNLLRFSSSPLSFPSLRRGFHGGRIVAMGSSAPESVNKPEEEWRAILSPEQFRILRQKGTEYPGTGEYNKVFDDGIYCCAGCGTPLYKSTTKFDSGCGWPAFFDGLPGAITRTPDPDGRRIEITCAACGGHLGHVFKGEGFPTPTDERHCVNSISLKFTPENPTL</sequence>
<name>MSRB2_ARATH</name>
<proteinExistence type="evidence at protein level"/>
<reference key="1">
    <citation type="journal article" date="1999" name="Nature">
        <title>Sequence and analysis of chromosome 4 of the plant Arabidopsis thaliana.</title>
        <authorList>
            <person name="Mayer K.F.X."/>
            <person name="Schueller C."/>
            <person name="Wambutt R."/>
            <person name="Murphy G."/>
            <person name="Volckaert G."/>
            <person name="Pohl T."/>
            <person name="Duesterhoeft A."/>
            <person name="Stiekema W."/>
            <person name="Entian K.-D."/>
            <person name="Terryn N."/>
            <person name="Harris B."/>
            <person name="Ansorge W."/>
            <person name="Brandt P."/>
            <person name="Grivell L.A."/>
            <person name="Rieger M."/>
            <person name="Weichselgartner M."/>
            <person name="de Simone V."/>
            <person name="Obermaier B."/>
            <person name="Mache R."/>
            <person name="Mueller M."/>
            <person name="Kreis M."/>
            <person name="Delseny M."/>
            <person name="Puigdomenech P."/>
            <person name="Watson M."/>
            <person name="Schmidtheini T."/>
            <person name="Reichert B."/>
            <person name="Portetelle D."/>
            <person name="Perez-Alonso M."/>
            <person name="Boutry M."/>
            <person name="Bancroft I."/>
            <person name="Vos P."/>
            <person name="Hoheisel J."/>
            <person name="Zimmermann W."/>
            <person name="Wedler H."/>
            <person name="Ridley P."/>
            <person name="Langham S.-A."/>
            <person name="McCullagh B."/>
            <person name="Bilham L."/>
            <person name="Robben J."/>
            <person name="van der Schueren J."/>
            <person name="Grymonprez B."/>
            <person name="Chuang Y.-J."/>
            <person name="Vandenbussche F."/>
            <person name="Braeken M."/>
            <person name="Weltjens I."/>
            <person name="Voet M."/>
            <person name="Bastiaens I."/>
            <person name="Aert R."/>
            <person name="Defoor E."/>
            <person name="Weitzenegger T."/>
            <person name="Bothe G."/>
            <person name="Ramsperger U."/>
            <person name="Hilbert H."/>
            <person name="Braun M."/>
            <person name="Holzer E."/>
            <person name="Brandt A."/>
            <person name="Peters S."/>
            <person name="van Staveren M."/>
            <person name="Dirkse W."/>
            <person name="Mooijman P."/>
            <person name="Klein Lankhorst R."/>
            <person name="Rose M."/>
            <person name="Hauf J."/>
            <person name="Koetter P."/>
            <person name="Berneiser S."/>
            <person name="Hempel S."/>
            <person name="Feldpausch M."/>
            <person name="Lamberth S."/>
            <person name="Van den Daele H."/>
            <person name="De Keyser A."/>
            <person name="Buysshaert C."/>
            <person name="Gielen J."/>
            <person name="Villarroel R."/>
            <person name="De Clercq R."/>
            <person name="van Montagu M."/>
            <person name="Rogers J."/>
            <person name="Cronin A."/>
            <person name="Quail M.A."/>
            <person name="Bray-Allen S."/>
            <person name="Clark L."/>
            <person name="Doggett J."/>
            <person name="Hall S."/>
            <person name="Kay M."/>
            <person name="Lennard N."/>
            <person name="McLay K."/>
            <person name="Mayes R."/>
            <person name="Pettett A."/>
            <person name="Rajandream M.A."/>
            <person name="Lyne M."/>
            <person name="Benes V."/>
            <person name="Rechmann S."/>
            <person name="Borkova D."/>
            <person name="Bloecker H."/>
            <person name="Scharfe M."/>
            <person name="Grimm M."/>
            <person name="Loehnert T.-H."/>
            <person name="Dose S."/>
            <person name="de Haan M."/>
            <person name="Maarse A.C."/>
            <person name="Schaefer M."/>
            <person name="Mueller-Auer S."/>
            <person name="Gabel C."/>
            <person name="Fuchs M."/>
            <person name="Fartmann B."/>
            <person name="Granderath K."/>
            <person name="Dauner D."/>
            <person name="Herzl A."/>
            <person name="Neumann S."/>
            <person name="Argiriou A."/>
            <person name="Vitale D."/>
            <person name="Liguori R."/>
            <person name="Piravandi E."/>
            <person name="Massenet O."/>
            <person name="Quigley F."/>
            <person name="Clabauld G."/>
            <person name="Muendlein A."/>
            <person name="Felber R."/>
            <person name="Schnabl S."/>
            <person name="Hiller R."/>
            <person name="Schmidt W."/>
            <person name="Lecharny A."/>
            <person name="Aubourg S."/>
            <person name="Chefdor F."/>
            <person name="Cooke R."/>
            <person name="Berger C."/>
            <person name="Monfort A."/>
            <person name="Casacuberta E."/>
            <person name="Gibbons T."/>
            <person name="Weber N."/>
            <person name="Vandenbol M."/>
            <person name="Bargues M."/>
            <person name="Terol J."/>
            <person name="Torres A."/>
            <person name="Perez-Perez A."/>
            <person name="Purnelle B."/>
            <person name="Bent E."/>
            <person name="Johnson S."/>
            <person name="Tacon D."/>
            <person name="Jesse T."/>
            <person name="Heijnen L."/>
            <person name="Schwarz S."/>
            <person name="Scholler P."/>
            <person name="Heber S."/>
            <person name="Francs P."/>
            <person name="Bielke C."/>
            <person name="Frishman D."/>
            <person name="Haase D."/>
            <person name="Lemcke K."/>
            <person name="Mewes H.-W."/>
            <person name="Stocker S."/>
            <person name="Zaccaria P."/>
            <person name="Bevan M."/>
            <person name="Wilson R.K."/>
            <person name="de la Bastide M."/>
            <person name="Habermann K."/>
            <person name="Parnell L."/>
            <person name="Dedhia N."/>
            <person name="Gnoj L."/>
            <person name="Schutz K."/>
            <person name="Huang E."/>
            <person name="Spiegel L."/>
            <person name="Sekhon M."/>
            <person name="Murray J."/>
            <person name="Sheet P."/>
            <person name="Cordes M."/>
            <person name="Abu-Threideh J."/>
            <person name="Stoneking T."/>
            <person name="Kalicki J."/>
            <person name="Graves T."/>
            <person name="Harmon G."/>
            <person name="Edwards J."/>
            <person name="Latreille P."/>
            <person name="Courtney L."/>
            <person name="Cloud J."/>
            <person name="Abbott A."/>
            <person name="Scott K."/>
            <person name="Johnson D."/>
            <person name="Minx P."/>
            <person name="Bentley D."/>
            <person name="Fulton B."/>
            <person name="Miller N."/>
            <person name="Greco T."/>
            <person name="Kemp K."/>
            <person name="Kramer J."/>
            <person name="Fulton L."/>
            <person name="Mardis E."/>
            <person name="Dante M."/>
            <person name="Pepin K."/>
            <person name="Hillier L.W."/>
            <person name="Nelson J."/>
            <person name="Spieth J."/>
            <person name="Ryan E."/>
            <person name="Andrews S."/>
            <person name="Geisel C."/>
            <person name="Layman D."/>
            <person name="Du H."/>
            <person name="Ali J."/>
            <person name="Berghoff A."/>
            <person name="Jones K."/>
            <person name="Drone K."/>
            <person name="Cotton M."/>
            <person name="Joshu C."/>
            <person name="Antonoiu B."/>
            <person name="Zidanic M."/>
            <person name="Strong C."/>
            <person name="Sun H."/>
            <person name="Lamar B."/>
            <person name="Yordan C."/>
            <person name="Ma P."/>
            <person name="Zhong J."/>
            <person name="Preston R."/>
            <person name="Vil D."/>
            <person name="Shekher M."/>
            <person name="Matero A."/>
            <person name="Shah R."/>
            <person name="Swaby I.K."/>
            <person name="O'Shaughnessy A."/>
            <person name="Rodriguez M."/>
            <person name="Hoffman J."/>
            <person name="Till S."/>
            <person name="Granat S."/>
            <person name="Shohdy N."/>
            <person name="Hasegawa A."/>
            <person name="Hameed A."/>
            <person name="Lodhi M."/>
            <person name="Johnson A."/>
            <person name="Chen E."/>
            <person name="Marra M.A."/>
            <person name="Martienssen R."/>
            <person name="McCombie W.R."/>
        </authorList>
    </citation>
    <scope>NUCLEOTIDE SEQUENCE [LARGE SCALE GENOMIC DNA]</scope>
    <source>
        <strain>cv. Columbia</strain>
    </source>
</reference>
<reference key="2">
    <citation type="journal article" date="2017" name="Plant J.">
        <title>Araport11: a complete reannotation of the Arabidopsis thaliana reference genome.</title>
        <authorList>
            <person name="Cheng C.Y."/>
            <person name="Krishnakumar V."/>
            <person name="Chan A.P."/>
            <person name="Thibaud-Nissen F."/>
            <person name="Schobel S."/>
            <person name="Town C.D."/>
        </authorList>
    </citation>
    <scope>GENOME REANNOTATION</scope>
    <source>
        <strain>cv. Columbia</strain>
    </source>
</reference>
<reference key="3">
    <citation type="journal article" date="2003" name="Science">
        <title>Empirical analysis of transcriptional activity in the Arabidopsis genome.</title>
        <authorList>
            <person name="Yamada K."/>
            <person name="Lim J."/>
            <person name="Dale J.M."/>
            <person name="Chen H."/>
            <person name="Shinn P."/>
            <person name="Palm C.J."/>
            <person name="Southwick A.M."/>
            <person name="Wu H.C."/>
            <person name="Kim C.J."/>
            <person name="Nguyen M."/>
            <person name="Pham P.K."/>
            <person name="Cheuk R.F."/>
            <person name="Karlin-Newmann G."/>
            <person name="Liu S.X."/>
            <person name="Lam B."/>
            <person name="Sakano H."/>
            <person name="Wu T."/>
            <person name="Yu G."/>
            <person name="Miranda M."/>
            <person name="Quach H.L."/>
            <person name="Tripp M."/>
            <person name="Chang C.H."/>
            <person name="Lee J.M."/>
            <person name="Toriumi M.J."/>
            <person name="Chan M.M."/>
            <person name="Tang C.C."/>
            <person name="Onodera C.S."/>
            <person name="Deng J.M."/>
            <person name="Akiyama K."/>
            <person name="Ansari Y."/>
            <person name="Arakawa T."/>
            <person name="Banh J."/>
            <person name="Banno F."/>
            <person name="Bowser L."/>
            <person name="Brooks S.Y."/>
            <person name="Carninci P."/>
            <person name="Chao Q."/>
            <person name="Choy N."/>
            <person name="Enju A."/>
            <person name="Goldsmith A.D."/>
            <person name="Gurjal M."/>
            <person name="Hansen N.F."/>
            <person name="Hayashizaki Y."/>
            <person name="Johnson-Hopson C."/>
            <person name="Hsuan V.W."/>
            <person name="Iida K."/>
            <person name="Karnes M."/>
            <person name="Khan S."/>
            <person name="Koesema E."/>
            <person name="Ishida J."/>
            <person name="Jiang P.X."/>
            <person name="Jones T."/>
            <person name="Kawai J."/>
            <person name="Kamiya A."/>
            <person name="Meyers C."/>
            <person name="Nakajima M."/>
            <person name="Narusaka M."/>
            <person name="Seki M."/>
            <person name="Sakurai T."/>
            <person name="Satou M."/>
            <person name="Tamse R."/>
            <person name="Vaysberg M."/>
            <person name="Wallender E.K."/>
            <person name="Wong C."/>
            <person name="Yamamura Y."/>
            <person name="Yuan S."/>
            <person name="Shinozaki K."/>
            <person name="Davis R.W."/>
            <person name="Theologis A."/>
            <person name="Ecker J.R."/>
        </authorList>
    </citation>
    <scope>NUCLEOTIDE SEQUENCE [LARGE SCALE MRNA] (ISOFORM 1)</scope>
    <source>
        <strain>cv. Columbia</strain>
    </source>
</reference>
<reference key="4">
    <citation type="journal article" date="2009" name="DNA Res.">
        <title>Analysis of multiple occurrences of alternative splicing events in Arabidopsis thaliana using novel sequenced full-length cDNAs.</title>
        <authorList>
            <person name="Iida K."/>
            <person name="Fukami-Kobayashi K."/>
            <person name="Toyoda A."/>
            <person name="Sakaki Y."/>
            <person name="Kobayashi M."/>
            <person name="Seki M."/>
            <person name="Shinozaki K."/>
        </authorList>
    </citation>
    <scope>NUCLEOTIDE SEQUENCE [LARGE SCALE MRNA] (ISOFORM 2)</scope>
    <source>
        <strain>cv. Columbia</strain>
    </source>
</reference>
<reference key="5">
    <citation type="submission" date="2002-03" db="EMBL/GenBank/DDBJ databases">
        <title>Full-length cDNA from Arabidopsis thaliana.</title>
        <authorList>
            <person name="Brover V.V."/>
            <person name="Troukhan M.E."/>
            <person name="Alexandrov N.A."/>
            <person name="Lu Y.-P."/>
            <person name="Flavell R.B."/>
            <person name="Feldmann K.A."/>
        </authorList>
    </citation>
    <scope>NUCLEOTIDE SEQUENCE [LARGE SCALE MRNA]</scope>
</reference>
<reference key="6">
    <citation type="journal article" date="2005" name="Plant Physiol.">
        <title>The Arabidopsis plastidic methionine sulfoxide reductase B proteins. Sequence and activity characteristics, comparison of the expression with plastidic methionine sulfoxide reductase A, and induction by photooxidative stress.</title>
        <authorList>
            <person name="Vieira Dos Santos C."/>
            <person name="Cuine S."/>
            <person name="Rouhier N."/>
            <person name="Rey P."/>
        </authorList>
    </citation>
    <scope>FUNCTION</scope>
    <scope>BIOPHYSICOCHEMICAL PROPERTIES</scope>
    <scope>CATALYTIC ACTIVITY</scope>
    <scope>SUBCELLULAR LOCATION</scope>
    <scope>TISSUE SPECIFICITY</scope>
    <scope>INDUCTION</scope>
</reference>
<reference key="7">
    <citation type="journal article" date="2006" name="Photosyn. Res.">
        <title>Plant methionine sulfoxide reductase A and B multigenic families.</title>
        <authorList>
            <person name="Rouhier N."/>
            <person name="Vieira Dos Santos C."/>
            <person name="Tarrago L."/>
            <person name="Rey P."/>
        </authorList>
    </citation>
    <scope>GENE FAMILY</scope>
    <scope>NOMENCLATURE</scope>
</reference>
<reference key="8">
    <citation type="journal article" date="2007" name="FEBS Lett.">
        <title>Specificity of thioredoxins and glutaredoxins as electron donors to two distinct classes of Arabidopsis plastidial methionine sulfoxide reductases B.</title>
        <authorList>
            <person name="Vieira Dos Santos C."/>
            <person name="Laugier E."/>
            <person name="Tarrago L."/>
            <person name="Massot V."/>
            <person name="Issakidis-Bourguet E."/>
            <person name="Rouhier N."/>
            <person name="Rey P."/>
        </authorList>
    </citation>
    <scope>FUNCTION</scope>
    <scope>CATALYTIC ACTIVITY</scope>
</reference>
<reference key="9">
    <citation type="journal article" date="2009" name="J. Biol. Chem.">
        <title>Regeneration mechanisms of Arabidopsis thaliana methionine sulfoxide reductases B by glutaredoxins and thioredoxins.</title>
        <authorList>
            <person name="Tarrago L."/>
            <person name="Laugier E."/>
            <person name="Zaffagnini M."/>
            <person name="Marchand C."/>
            <person name="Le Marechal P."/>
            <person name="Rouhier N."/>
            <person name="Lemaire S.D."/>
            <person name="Rey P."/>
        </authorList>
    </citation>
    <scope>FUNCTION</scope>
    <scope>MUTAGENESIS OF CYS-134</scope>
    <scope>CATALYTIC ACTIVITY</scope>
    <scope>BIOPHYSICOCHEMICAL PROPERTIES</scope>
</reference>
<reference key="10">
    <citation type="journal article" date="2010" name="Plant J.">
        <title>Arabidopsis thaliana plastidial methionine sulfoxide reductases B, MSRBs, account for most leaf peptide MSR activity and are essential for growth under environmental constraints through a role in the preservation of photosystem antennas.</title>
        <authorList>
            <person name="Laugier E."/>
            <person name="Tarrago L."/>
            <person name="Vieira Dos Santos C."/>
            <person name="Eymery F."/>
            <person name="Havaux M."/>
            <person name="Rey P."/>
        </authorList>
    </citation>
    <scope>FUNCTION</scope>
</reference>
<evidence type="ECO:0000250" key="1">
    <source>
        <dbReference type="UniProtKB" id="P0A746"/>
    </source>
</evidence>
<evidence type="ECO:0000255" key="2"/>
<evidence type="ECO:0000255" key="3">
    <source>
        <dbReference type="PROSITE-ProRule" id="PRU01126"/>
    </source>
</evidence>
<evidence type="ECO:0000269" key="4">
    <source>
    </source>
</evidence>
<evidence type="ECO:0000269" key="5">
    <source>
    </source>
</evidence>
<evidence type="ECO:0000269" key="6">
    <source>
    </source>
</evidence>
<evidence type="ECO:0000269" key="7">
    <source>
    </source>
</evidence>
<evidence type="ECO:0000303" key="8">
    <source>
    </source>
</evidence>
<evidence type="ECO:0000303" key="9">
    <source>
    </source>
</evidence>
<evidence type="ECO:0000303" key="10">
    <source>
    </source>
</evidence>
<evidence type="ECO:0000305" key="11"/>
<evidence type="ECO:0000312" key="12">
    <source>
        <dbReference type="Araport" id="AT4G21860"/>
    </source>
</evidence>
<evidence type="ECO:0000312" key="13">
    <source>
        <dbReference type="EMBL" id="AL021890"/>
    </source>
</evidence>
<dbReference type="EC" id="1.8.4.12" evidence="4 5 6"/>
<dbReference type="EMBL" id="AL021890">
    <property type="status" value="NOT_ANNOTATED_CDS"/>
    <property type="molecule type" value="Genomic_DNA"/>
</dbReference>
<dbReference type="EMBL" id="AL161556">
    <property type="status" value="NOT_ANNOTATED_CDS"/>
    <property type="molecule type" value="Genomic_DNA"/>
</dbReference>
<dbReference type="EMBL" id="CP002687">
    <property type="protein sequence ID" value="AEE84513.1"/>
    <property type="molecule type" value="Genomic_DNA"/>
</dbReference>
<dbReference type="EMBL" id="CP002687">
    <property type="protein sequence ID" value="AEE84514.1"/>
    <property type="molecule type" value="Genomic_DNA"/>
</dbReference>
<dbReference type="EMBL" id="CP002687">
    <property type="protein sequence ID" value="AEE84515.1"/>
    <property type="molecule type" value="Genomic_DNA"/>
</dbReference>
<dbReference type="EMBL" id="CP002687">
    <property type="protein sequence ID" value="ANM67853.1"/>
    <property type="molecule type" value="Genomic_DNA"/>
</dbReference>
<dbReference type="EMBL" id="AF360341">
    <property type="protein sequence ID" value="AAK28638.1"/>
    <property type="molecule type" value="mRNA"/>
</dbReference>
<dbReference type="EMBL" id="AY051078">
    <property type="protein sequence ID" value="AAK93755.1"/>
    <property type="molecule type" value="mRNA"/>
</dbReference>
<dbReference type="EMBL" id="AK316971">
    <property type="protein sequence ID" value="BAH19668.1"/>
    <property type="molecule type" value="mRNA"/>
</dbReference>
<dbReference type="EMBL" id="AY085655">
    <property type="protein sequence ID" value="AAM62876.1"/>
    <property type="molecule type" value="mRNA"/>
</dbReference>
<dbReference type="RefSeq" id="NP_001078423.1">
    <molecule id="Q9C5C8-2"/>
    <property type="nucleotide sequence ID" value="NM_001084954.2"/>
</dbReference>
<dbReference type="RefSeq" id="NP_001190791.1">
    <molecule id="Q9C5C8-1"/>
    <property type="nucleotide sequence ID" value="NM_001203862.1"/>
</dbReference>
<dbReference type="RefSeq" id="NP_001320026.1">
    <molecule id="Q9C5C8-1"/>
    <property type="nucleotide sequence ID" value="NM_001341518.1"/>
</dbReference>
<dbReference type="RefSeq" id="NP_567639.1">
    <molecule id="Q9C5C8-1"/>
    <property type="nucleotide sequence ID" value="NM_118306.7"/>
</dbReference>
<dbReference type="SMR" id="Q9C5C8"/>
<dbReference type="BioGRID" id="13563">
    <property type="interactions" value="1"/>
</dbReference>
<dbReference type="FunCoup" id="Q9C5C8">
    <property type="interactions" value="1080"/>
</dbReference>
<dbReference type="IntAct" id="Q9C5C8">
    <property type="interactions" value="1"/>
</dbReference>
<dbReference type="STRING" id="3702.Q9C5C8"/>
<dbReference type="iPTMnet" id="Q9C5C8"/>
<dbReference type="PaxDb" id="3702-AT4G21860.1"/>
<dbReference type="ProteomicsDB" id="239015">
    <molecule id="Q9C5C8-1"/>
</dbReference>
<dbReference type="EnsemblPlants" id="AT4G21860.1">
    <molecule id="Q9C5C8-1"/>
    <property type="protein sequence ID" value="AT4G21860.1"/>
    <property type="gene ID" value="AT4G21860"/>
</dbReference>
<dbReference type="EnsemblPlants" id="AT4G21860.2">
    <molecule id="Q9C5C8-2"/>
    <property type="protein sequence ID" value="AT4G21860.2"/>
    <property type="gene ID" value="AT4G21860"/>
</dbReference>
<dbReference type="EnsemblPlants" id="AT4G21860.3">
    <molecule id="Q9C5C8-1"/>
    <property type="protein sequence ID" value="AT4G21860.3"/>
    <property type="gene ID" value="AT4G21860"/>
</dbReference>
<dbReference type="EnsemblPlants" id="AT4G21860.4">
    <molecule id="Q9C5C8-1"/>
    <property type="protein sequence ID" value="AT4G21860.4"/>
    <property type="gene ID" value="AT4G21860"/>
</dbReference>
<dbReference type="GeneID" id="828274"/>
<dbReference type="Gramene" id="AT4G21860.1">
    <molecule id="Q9C5C8-1"/>
    <property type="protein sequence ID" value="AT4G21860.1"/>
    <property type="gene ID" value="AT4G21860"/>
</dbReference>
<dbReference type="Gramene" id="AT4G21860.2">
    <molecule id="Q9C5C8-2"/>
    <property type="protein sequence ID" value="AT4G21860.2"/>
    <property type="gene ID" value="AT4G21860"/>
</dbReference>
<dbReference type="Gramene" id="AT4G21860.3">
    <molecule id="Q9C5C8-1"/>
    <property type="protein sequence ID" value="AT4G21860.3"/>
    <property type="gene ID" value="AT4G21860"/>
</dbReference>
<dbReference type="Gramene" id="AT4G21860.4">
    <molecule id="Q9C5C8-1"/>
    <property type="protein sequence ID" value="AT4G21860.4"/>
    <property type="gene ID" value="AT4G21860"/>
</dbReference>
<dbReference type="KEGG" id="ath:AT4G21860"/>
<dbReference type="Araport" id="AT4G21860"/>
<dbReference type="TAIR" id="AT4G21860">
    <property type="gene designation" value="MSRB2"/>
</dbReference>
<dbReference type="eggNOG" id="KOG0856">
    <property type="taxonomic scope" value="Eukaryota"/>
</dbReference>
<dbReference type="HOGENOM" id="CLU_031040_8_1_1"/>
<dbReference type="InParanoid" id="Q9C5C8"/>
<dbReference type="OMA" id="CERCGSH"/>
<dbReference type="PhylomeDB" id="Q9C5C8"/>
<dbReference type="SABIO-RK" id="Q9C5C8"/>
<dbReference type="PRO" id="PR:Q9C5C8"/>
<dbReference type="Proteomes" id="UP000006548">
    <property type="component" value="Chromosome 4"/>
</dbReference>
<dbReference type="ExpressionAtlas" id="Q9C5C8">
    <property type="expression patterns" value="baseline and differential"/>
</dbReference>
<dbReference type="GO" id="GO:0009507">
    <property type="term" value="C:chloroplast"/>
    <property type="evidence" value="ECO:0000314"/>
    <property type="project" value="UniProtKB"/>
</dbReference>
<dbReference type="GO" id="GO:0009570">
    <property type="term" value="C:chloroplast stroma"/>
    <property type="evidence" value="ECO:0007005"/>
    <property type="project" value="TAIR"/>
</dbReference>
<dbReference type="GO" id="GO:0005829">
    <property type="term" value="C:cytosol"/>
    <property type="evidence" value="ECO:0007005"/>
    <property type="project" value="TAIR"/>
</dbReference>
<dbReference type="GO" id="GO:0046872">
    <property type="term" value="F:metal ion binding"/>
    <property type="evidence" value="ECO:0007669"/>
    <property type="project" value="UniProtKB-KW"/>
</dbReference>
<dbReference type="GO" id="GO:0033743">
    <property type="term" value="F:peptide-methionine (R)-S-oxide reductase activity"/>
    <property type="evidence" value="ECO:0000314"/>
    <property type="project" value="UniProtKB"/>
</dbReference>
<dbReference type="GO" id="GO:0030091">
    <property type="term" value="P:protein repair"/>
    <property type="evidence" value="ECO:0007669"/>
    <property type="project" value="InterPro"/>
</dbReference>
<dbReference type="GO" id="GO:0006979">
    <property type="term" value="P:response to oxidative stress"/>
    <property type="evidence" value="ECO:0000270"/>
    <property type="project" value="UniProtKB"/>
</dbReference>
<dbReference type="FunFam" id="2.170.150.20:FF:000009">
    <property type="entry name" value="Peptide-methionine (R)-S-oxide reductase"/>
    <property type="match status" value="1"/>
</dbReference>
<dbReference type="Gene3D" id="2.170.150.20">
    <property type="entry name" value="Peptide methionine sulfoxide reductase"/>
    <property type="match status" value="1"/>
</dbReference>
<dbReference type="InterPro" id="IPR028427">
    <property type="entry name" value="Met_Sox_Rdtase_MsrB"/>
</dbReference>
<dbReference type="InterPro" id="IPR002579">
    <property type="entry name" value="Met_Sox_Rdtase_MsrB_dom"/>
</dbReference>
<dbReference type="InterPro" id="IPR011057">
    <property type="entry name" value="Mss4-like_sf"/>
</dbReference>
<dbReference type="NCBIfam" id="TIGR00357">
    <property type="entry name" value="peptide-methionine (R)-S-oxide reductase MsrB"/>
    <property type="match status" value="1"/>
</dbReference>
<dbReference type="PANTHER" id="PTHR46081">
    <property type="entry name" value="PEPTIDE METHIONINE SULFOXIDE REDUCTASE 2"/>
    <property type="match status" value="1"/>
</dbReference>
<dbReference type="PANTHER" id="PTHR46081:SF8">
    <property type="entry name" value="PEPTIDE METHIONINE SULFOXIDE REDUCTASE 2"/>
    <property type="match status" value="1"/>
</dbReference>
<dbReference type="Pfam" id="PF01641">
    <property type="entry name" value="SelR"/>
    <property type="match status" value="1"/>
</dbReference>
<dbReference type="SUPFAM" id="SSF51316">
    <property type="entry name" value="Mss4-like"/>
    <property type="match status" value="1"/>
</dbReference>
<dbReference type="PROSITE" id="PS51790">
    <property type="entry name" value="MSRB"/>
    <property type="match status" value="1"/>
</dbReference>
<organism>
    <name type="scientific">Arabidopsis thaliana</name>
    <name type="common">Mouse-ear cress</name>
    <dbReference type="NCBI Taxonomy" id="3702"/>
    <lineage>
        <taxon>Eukaryota</taxon>
        <taxon>Viridiplantae</taxon>
        <taxon>Streptophyta</taxon>
        <taxon>Embryophyta</taxon>
        <taxon>Tracheophyta</taxon>
        <taxon>Spermatophyta</taxon>
        <taxon>Magnoliopsida</taxon>
        <taxon>eudicotyledons</taxon>
        <taxon>Gunneridae</taxon>
        <taxon>Pentapetalae</taxon>
        <taxon>rosids</taxon>
        <taxon>malvids</taxon>
        <taxon>Brassicales</taxon>
        <taxon>Brassicaceae</taxon>
        <taxon>Camelineae</taxon>
        <taxon>Arabidopsis</taxon>
    </lineage>
</organism>
<comment type="function">
    <text evidence="4 5 6 7">Catalyzes the reduction of methionine sulfoxide (MetSO) to methionine in proteins. Specifically reduces the MetSO R-enantiomer. Plays a protective role against oxidative stress by restoring activity to proteins that have been inactivated by methionine oxidation. May play an essential function in association with MSRB1 in maintaining vegetative growth during environmental constraints, through the preservation of photosynthetic antennae. MSRB1 and MSRB2 account for most of the leaf peptide MSR capacity.</text>
</comment>
<comment type="catalytic activity">
    <reaction evidence="4 5 6">
        <text>L-methionyl-[protein] + [thioredoxin]-disulfide + H2O = L-methionyl-(R)-S-oxide-[protein] + [thioredoxin]-dithiol</text>
        <dbReference type="Rhea" id="RHEA:24164"/>
        <dbReference type="Rhea" id="RHEA-COMP:10698"/>
        <dbReference type="Rhea" id="RHEA-COMP:10700"/>
        <dbReference type="Rhea" id="RHEA-COMP:12313"/>
        <dbReference type="Rhea" id="RHEA-COMP:12314"/>
        <dbReference type="ChEBI" id="CHEBI:15377"/>
        <dbReference type="ChEBI" id="CHEBI:16044"/>
        <dbReference type="ChEBI" id="CHEBI:29950"/>
        <dbReference type="ChEBI" id="CHEBI:45764"/>
        <dbReference type="ChEBI" id="CHEBI:50058"/>
        <dbReference type="EC" id="1.8.4.12"/>
    </reaction>
</comment>
<comment type="cofactor">
    <cofactor evidence="1">
        <name>Zn(2+)</name>
        <dbReference type="ChEBI" id="CHEBI:29105"/>
    </cofactor>
    <text evidence="1">Binds 1 zinc ion per subunit.</text>
</comment>
<comment type="biophysicochemical properties">
    <kinetics>
        <KM evidence="4">54 uM for dabsyl methionine sulfoxide</KM>
        <text evidence="6">kcat is 0.028 sec(-1) with dabsyl-MetSO as substrate.</text>
    </kinetics>
</comment>
<comment type="subcellular location">
    <subcellularLocation>
        <location evidence="4">Plastid</location>
        <location evidence="4">Chloroplast</location>
    </subcellularLocation>
</comment>
<comment type="alternative products">
    <event type="alternative splicing"/>
    <isoform>
        <id>Q9C5C8-1</id>
        <name>1</name>
        <sequence type="displayed"/>
    </isoform>
    <isoform>
        <id>Q9C5C8-2</id>
        <name>2</name>
        <sequence type="described" ref="VSP_039510 VSP_039511"/>
    </isoform>
</comment>
<comment type="tissue specificity">
    <text evidence="4">Expressed in stems, young leaves, floral buds and flowers. Expressed at low levels in roots, mature leaves and siliques (at protein level).</text>
</comment>
<comment type="induction">
    <text evidence="4">By photooxidative stress.</text>
</comment>
<comment type="miscellaneous">
    <text>Reduced by thioredoxins f, m, x and y through a dithiol-disulfide exchange involving both redox-active Cys of the two partners.</text>
</comment>
<comment type="similarity">
    <text evidence="11">Belongs to the MsrB Met sulfoxide reductase family.</text>
</comment>